<evidence type="ECO:0000250" key="1">
    <source>
        <dbReference type="UniProtKB" id="Q9WY48"/>
    </source>
</evidence>
<evidence type="ECO:0000255" key="2">
    <source>
        <dbReference type="PROSITE-ProRule" id="PRU00541"/>
    </source>
</evidence>
<evidence type="ECO:0000255" key="3">
    <source>
        <dbReference type="PROSITE-ProRule" id="PRU00542"/>
    </source>
</evidence>
<evidence type="ECO:0000269" key="4">
    <source>
    </source>
</evidence>
<evidence type="ECO:0000269" key="5">
    <source>
    </source>
</evidence>
<evidence type="ECO:0000269" key="6">
    <source>
    </source>
</evidence>
<evidence type="ECO:0000269" key="7">
    <source>
    </source>
</evidence>
<evidence type="ECO:0000305" key="8"/>
<evidence type="ECO:0000305" key="9">
    <source>
    </source>
</evidence>
<evidence type="ECO:0000305" key="10">
    <source>
    </source>
</evidence>
<evidence type="ECO:0000305" key="11">
    <source>
    </source>
</evidence>
<protein>
    <recommendedName>
        <fullName>ATP-dependent DNA helicase RecG</fullName>
        <ecNumber evidence="5">5.6.2.3</ecNumber>
        <ecNumber evidence="5">5.6.2.4</ecNumber>
    </recommendedName>
    <alternativeName>
        <fullName evidence="8">DNA 3'-5'/5'-3' helicase RecG</fullName>
    </alternativeName>
    <alternativeName>
        <fullName>DNA branch migration protein RecG</fullName>
    </alternativeName>
</protein>
<gene>
    <name type="primary">recG</name>
    <name type="ordered locus">Rv2973c</name>
    <name type="ORF">MTCY349.14</name>
</gene>
<name>RECG_MYCTU</name>
<organism>
    <name type="scientific">Mycobacterium tuberculosis (strain ATCC 25618 / H37Rv)</name>
    <dbReference type="NCBI Taxonomy" id="83332"/>
    <lineage>
        <taxon>Bacteria</taxon>
        <taxon>Bacillati</taxon>
        <taxon>Actinomycetota</taxon>
        <taxon>Actinomycetes</taxon>
        <taxon>Mycobacteriales</taxon>
        <taxon>Mycobacteriaceae</taxon>
        <taxon>Mycobacterium</taxon>
        <taxon>Mycobacterium tuberculosis complex</taxon>
    </lineage>
</organism>
<comment type="function">
    <text evidence="4 5 6 7 10 11">Plays a critical role in recombination and DNA repair (Probable) (PubMed:23438087, PubMed:26276393). Helps process Holliday junction (HJ) intermediates to mature products by catalyzing branch migration (PubMed:22628485, PubMed:23438087). Has replication fork regression activity, able to displace proteins bound to DNA (PubMed:26276393). An ATP-dependent helicase with a preference for HJ DNA, followed by lagging strand replication forks (RF) (PubMed:22628485, PubMed:23438087, PubMed:24169816). Has DNA helicase activity in both directions in vitro (PubMed:23438087). Unwinds branched DNA substrates such as HJs to flayed complexes, unwinds full RFs, R-loop and D-loops, has weak and strong unwinding activities on leading and lagging strand RFs respectively, has no unwinding activity on flayed DNA duplex (PubMed:22628485, PubMed:23438087, PubMed:24169816). Drives HJ branch migration in both directions (PubMed:22628485). Helicase activity works with ATP or dATP but not other nucleotides, ADP or ATP-gamma-S (PubMed:22628485). Binds partial and complete RFs, HJs, bubble, D- and R-loop substrates but not linear double-stranded (ds)DNA (PubMed:22628485, PubMed:23438087, PubMed:24169816). HJ DNA-binding alters the DNA conformation (PubMed:23438087). Also binds long (40-100 nucleotide) single-stranded (ss)DNA (PubMed:22628485). Partially complements an E.coli recG deletion when challenged with DNA damaging agents (PubMed:23438087, PubMed:26276393).</text>
</comment>
<comment type="catalytic activity">
    <reaction evidence="5">
        <text>Couples ATP hydrolysis with the unwinding of duplex DNA at the replication fork by translocating in the 5'-3' direction. This creates two antiparallel DNA single strands (ssDNA). The leading ssDNA polymer is the template for DNA polymerase III holoenzyme which synthesizes a continuous strand.</text>
        <dbReference type="EC" id="5.6.2.3"/>
    </reaction>
</comment>
<comment type="catalytic activity">
    <reaction evidence="5 9">
        <text>Couples ATP hydrolysis with the unwinding of duplex DNA by translocating in the 3'-5' direction.</text>
        <dbReference type="EC" id="5.6.2.4"/>
    </reaction>
</comment>
<comment type="catalytic activity">
    <reaction evidence="4 5 6">
        <text>ATP + H2O = ADP + phosphate + H(+)</text>
        <dbReference type="Rhea" id="RHEA:13065"/>
        <dbReference type="ChEBI" id="CHEBI:15377"/>
        <dbReference type="ChEBI" id="CHEBI:15378"/>
        <dbReference type="ChEBI" id="CHEBI:30616"/>
        <dbReference type="ChEBI" id="CHEBI:43474"/>
        <dbReference type="ChEBI" id="CHEBI:456216"/>
        <dbReference type="EC" id="5.6.2.4"/>
    </reaction>
</comment>
<comment type="cofactor">
    <cofactor evidence="4">
        <name>a divalent metal cation</name>
        <dbReference type="ChEBI" id="CHEBI:60240"/>
    </cofactor>
    <text evidence="4">In vitro unwinding requires a divalent metal cation, Mg(2+)=Mn(2+)&gt;Cu(2+)&gt;Fe(2+)&gt;Co(2+) (PubMed:22628485).</text>
</comment>
<comment type="biophysicochemical properties">
    <kinetics>
        <KM evidence="4">202 uM for ATP with dsDNA</KM>
        <KM evidence="5">197 uM for ATP with mobile HJ</KM>
        <KM evidence="5">218 uM for ATP with immobile HJ</KM>
        <text evidence="4 5">kcat is 3180 min(-1) with dsDNA (PubMed:22628485). kcat is 61 min(-1) with mobile HJ, kcat is 46 min(-1) with immobile HJ (PubMed:23438087).</text>
    </kinetics>
</comment>
<comment type="subunit">
    <text evidence="9 10">Monomer (Probable) (PubMed:22628485, PubMed:23438087).</text>
</comment>
<comment type="induction">
    <text evidence="5">Very slight induction by DNA damaging agents mitomycin C, UV light and methyl methane sulfonate by 24 hours after induction (at protein level) (PubMed:23438087).</text>
</comment>
<comment type="domain">
    <text evidence="1">The wedge domain within the N-terminus inserts into the replication fork junction, where the lagging and leading strand split (By similarity).</text>
</comment>
<comment type="miscellaneous">
    <text evidence="5">Strain H37Ra is estimated to have about 3 RecG molecules per cell (PubMed:23438087).</text>
</comment>
<comment type="similarity">
    <text evidence="8">Belongs to the helicase family. RecG subfamily.</text>
</comment>
<keyword id="KW-0067">ATP-binding</keyword>
<keyword id="KW-0227">DNA damage</keyword>
<keyword id="KW-0233">DNA recombination</keyword>
<keyword id="KW-0234">DNA repair</keyword>
<keyword id="KW-0238">DNA-binding</keyword>
<keyword id="KW-0347">Helicase</keyword>
<keyword id="KW-0378">Hydrolase</keyword>
<keyword id="KW-0413">Isomerase</keyword>
<keyword id="KW-0547">Nucleotide-binding</keyword>
<keyword id="KW-1185">Reference proteome</keyword>
<accession>P9WMQ7</accession>
<accession>L0TDY0</accession>
<accession>P64322</accession>
<accession>P95122</accession>
<reference key="1">
    <citation type="journal article" date="1998" name="Nature">
        <title>Deciphering the biology of Mycobacterium tuberculosis from the complete genome sequence.</title>
        <authorList>
            <person name="Cole S.T."/>
            <person name="Brosch R."/>
            <person name="Parkhill J."/>
            <person name="Garnier T."/>
            <person name="Churcher C.M."/>
            <person name="Harris D.E."/>
            <person name="Gordon S.V."/>
            <person name="Eiglmeier K."/>
            <person name="Gas S."/>
            <person name="Barry C.E. III"/>
            <person name="Tekaia F."/>
            <person name="Badcock K."/>
            <person name="Basham D."/>
            <person name="Brown D."/>
            <person name="Chillingworth T."/>
            <person name="Connor R."/>
            <person name="Davies R.M."/>
            <person name="Devlin K."/>
            <person name="Feltwell T."/>
            <person name="Gentles S."/>
            <person name="Hamlin N."/>
            <person name="Holroyd S."/>
            <person name="Hornsby T."/>
            <person name="Jagels K."/>
            <person name="Krogh A."/>
            <person name="McLean J."/>
            <person name="Moule S."/>
            <person name="Murphy L.D."/>
            <person name="Oliver S."/>
            <person name="Osborne J."/>
            <person name="Quail M.A."/>
            <person name="Rajandream M.A."/>
            <person name="Rogers J."/>
            <person name="Rutter S."/>
            <person name="Seeger K."/>
            <person name="Skelton S."/>
            <person name="Squares S."/>
            <person name="Squares R."/>
            <person name="Sulston J.E."/>
            <person name="Taylor K."/>
            <person name="Whitehead S."/>
            <person name="Barrell B.G."/>
        </authorList>
    </citation>
    <scope>NUCLEOTIDE SEQUENCE [LARGE SCALE GENOMIC DNA]</scope>
    <source>
        <strain>ATCC 25618 / H37Rv</strain>
    </source>
</reference>
<reference key="2">
    <citation type="journal article" date="2012" name="Microbiology">
        <title>Mycobacterium tuberculosis RecG binds and unwinds model DNA substrates with a preference for Holliday junctions.</title>
        <authorList>
            <person name="Zegeye E.D."/>
            <person name="Balasingham S.V."/>
            <person name="Laerdahl J.K."/>
            <person name="Homberset H."/>
            <person name="Toenjum T."/>
        </authorList>
    </citation>
    <scope>FUNCTION AS A BRANCH MIGRATION HELICASE</scope>
    <scope>FUNCTION AS AN ATPASE</scope>
    <scope>COFACTOR</scope>
    <scope>BIOPHYSICOCHEMICAL PROPERTIES</scope>
    <scope>SUBUNIT</scope>
    <scope>DNA-BINDING</scope>
    <source>
        <strain>ATCC 25618 / H37Rv</strain>
    </source>
</reference>
<reference key="3">
    <citation type="journal article" date="2013" name="FEBS J.">
        <title>Evidence for the role of Mycobacterium tuberculosis RecG helicase in DNA repair and recombination.</title>
        <authorList>
            <person name="Thakur R.S."/>
            <person name="Basavaraju S."/>
            <person name="Somyajit K."/>
            <person name="Jain A."/>
            <person name="Subramanya S."/>
            <person name="Muniyappa K."/>
            <person name="Nagaraju G."/>
        </authorList>
    </citation>
    <scope>FUNCTION AS A BRANCH MIGRATION HELICASE</scope>
    <scope>FUNCTION AS AN ATPASE</scope>
    <scope>BIDRECTIONAL CATALYTIC ACTIVITY</scope>
    <scope>BIOPHYSICOCHEMICAL PROPERTIES</scope>
    <scope>SUBUNIT</scope>
    <scope>INDUCTION</scope>
    <scope>PROTEIN ABUNDANCE</scope>
    <scope>DNA-BINDING</scope>
    <scope>MUTAGENESIS OF LYS-321</scope>
    <source>
        <strain>ATCC 25177 / H37Ra</strain>
    </source>
</reference>
<reference key="4">
    <citation type="journal article" date="2014" name="Microbiology">
        <title>Effects of conserved residues and naturally occurring mutations on Mycobacterium tuberculosis RecG helicase activity.</title>
        <authorList>
            <person name="Zegeye E.D."/>
            <person name="Balasingham S.V."/>
            <person name="Laerdahl J.K."/>
            <person name="Homberset H."/>
            <person name="Kristiansen P.E."/>
            <person name="Toenjum T."/>
        </authorList>
    </citation>
    <scope>FUNCTION AS A HELICASE</scope>
    <scope>FUNCTION AS AN ATPASE</scope>
    <scope>MUTAGENESIS OF PHE-99; PRO-285; PHE-286; GLN-292; LYS-321; THR-408 AND ARG-627</scope>
    <source>
        <strain>ATCC 25618 / H37Rv</strain>
    </source>
</reference>
<reference key="5">
    <citation type="journal article" date="2015" name="J. Biol. Chem.">
        <title>Mycobacterium tuberculosis RecG protein but not RuvAB or RecA protein is efficient at remodeling the stalled replication forks: implications for multiple mechanisms of replication restart in mycobacteria.</title>
        <authorList>
            <person name="Thakur R.S."/>
            <person name="Basavaraju S."/>
            <person name="Khanduja J.S."/>
            <person name="Muniyappa K."/>
            <person name="Nagaraju G."/>
        </authorList>
    </citation>
    <scope>FUNCTION IN REPLICATION FORK REGRESSION</scope>
    <scope>MUTAGENESIS OF LYS-321</scope>
    <source>
        <strain>ATCC 25177 / H37Ra</strain>
    </source>
</reference>
<feature type="chain" id="PRO_0000102146" description="ATP-dependent DNA helicase RecG">
    <location>
        <begin position="1"/>
        <end position="737"/>
    </location>
</feature>
<feature type="domain" description="Helicase ATP-binding" evidence="2">
    <location>
        <begin position="302"/>
        <end position="477"/>
    </location>
</feature>
<feature type="domain" description="Helicase C-terminal" evidence="3">
    <location>
        <begin position="514"/>
        <end position="673"/>
    </location>
</feature>
<feature type="region of interest" description="Wedge domain" evidence="1">
    <location>
        <begin position="44"/>
        <end position="171"/>
    </location>
</feature>
<feature type="short sequence motif" description="DEAH box" evidence="2">
    <location>
        <begin position="397"/>
        <end position="400"/>
    </location>
</feature>
<feature type="binding site" evidence="2">
    <location>
        <begin position="315"/>
        <end position="322"/>
    </location>
    <ligand>
        <name>ATP</name>
        <dbReference type="ChEBI" id="CHEBI:30616"/>
    </ligand>
</feature>
<feature type="mutagenesis site" description="Wild-type Holliday junction (HJ) and ATP-binding, 4-fold reduced ATPase activity, 2-fold reduced DNA unwinding activity." evidence="6">
    <original>F</original>
    <variation>A</variation>
    <location>
        <position position="99"/>
    </location>
</feature>
<feature type="mutagenesis site" description="Wild-type HJ DNA-binding, severely reduced ATPase and DNA unwinding activity, reduced ATP-binding." evidence="6">
    <original>P</original>
    <variation>S</variation>
    <location>
        <position position="285"/>
    </location>
</feature>
<feature type="mutagenesis site" description="Wild-type HJ DNA-binding, severely reduced ATPase and DNA unwinding activity, reduced ATP-binding." evidence="6">
    <original>F</original>
    <variation>A</variation>
    <location>
        <position position="286"/>
    </location>
</feature>
<feature type="mutagenesis site" description="Wild-type HJ DNA-binding, severely reduced ATPase and DNA unwinding activity, reduced ATP-binding." evidence="6">
    <original>Q</original>
    <variation>A</variation>
    <location>
        <position position="292"/>
    </location>
</feature>
<feature type="mutagenesis site" description="Loss of ATPase and helicase activity. Wild-type HJ DNA-binding, reduced ATP-binding. Loss of replication fork regression." evidence="5 6 7">
    <original>K</original>
    <variation>A</variation>
    <location>
        <position position="321"/>
    </location>
</feature>
<feature type="mutagenesis site" description="Wild-type HJ DNA-binding, 1.5-fold reduced ATPase activity, 4.5-fold reduced DNA unwinding activity, wild-type ATP-binding." evidence="6">
    <original>T</original>
    <variation>A</variation>
    <location>
        <position position="408"/>
    </location>
</feature>
<feature type="mutagenesis site" description="Wild-type HJ DNA-binding, severely reduced ATPase and DNA unwinding activity, reduced ATP-binding." evidence="6">
    <original>R</original>
    <variation>A</variation>
    <location>
        <position position="627"/>
    </location>
</feature>
<proteinExistence type="evidence at protein level"/>
<sequence length="737" mass="80361">MASLSDRLDRVLGATAADALDEQFGMRTVDDLLRHYPRSYVEGAARVGIGDARPEAGEHITIVDVITDTYSFPMKKKPNRKCLRITVGGGRNKVTATFFNADYIMRDLTKHTKVMLSGEVGYYKGAMQLTHPAFLILDSPDGKNHGTRSLKSIADASKAISGELVVEEFERRFFPIYPASTKVQSWDIFKCVRQVLDVLDRVDDPLPAELRAKHGLIPEDEALRAIHLAESQSLRERARERLTFDEAVGLQWALVARRHGELSESGPSAAWKSNGLAAELLRRLPFELTAGQREVLDVLSDGLAANRPLNRLLQGEVGSGKTIVAVLAMLQMVDAGYQCALLAPTEVLAAQHLRSIRDVLGPLAMGGQLGGAENATRVALLTGSMTAGQKKQVRAEIASGQVGIVIGTHALLQEAVDFHNLGMVVVDEQHRFGVEQRDQLRAKAPAGITPHLLVMTATPIPRTVALTVYGDLETSTLRELPLGRQPIATNVIFVKDKPAWLDRAWRRIIEEAAAGRQAYVVAPRIDESDDTDVQGGVRPSATAEGLFSRLRSAELAELRLALMHGRLSADDKDAAMAAFRAGEVDVLVCTTVIEVGVDVPNATVMLVMDADRFGISQLHQLRGRIGRGEHPSVCLLASWVPPDTPAGQRLRAVAGTMDGFALADLDLKERKEGDVLGRNQSGKAITLRLLSLAEHEEYIVAARDFCIEAYKNPTDPALALMAARFTSTDRIEYLDKS</sequence>
<dbReference type="EC" id="5.6.2.3" evidence="5"/>
<dbReference type="EC" id="5.6.2.4" evidence="5"/>
<dbReference type="EMBL" id="AL123456">
    <property type="protein sequence ID" value="CCP45778.1"/>
    <property type="molecule type" value="Genomic_DNA"/>
</dbReference>
<dbReference type="PIR" id="B70672">
    <property type="entry name" value="B70672"/>
</dbReference>
<dbReference type="RefSeq" id="NP_217489.1">
    <property type="nucleotide sequence ID" value="NC_000962.3"/>
</dbReference>
<dbReference type="RefSeq" id="WP_003415026.1">
    <property type="nucleotide sequence ID" value="NZ_NVQJ01000015.1"/>
</dbReference>
<dbReference type="SMR" id="P9WMQ7"/>
<dbReference type="FunCoup" id="P9WMQ7">
    <property type="interactions" value="194"/>
</dbReference>
<dbReference type="STRING" id="83332.Rv2973c"/>
<dbReference type="PaxDb" id="83332-Rv2973c"/>
<dbReference type="DNASU" id="887439"/>
<dbReference type="GeneID" id="887439"/>
<dbReference type="KEGG" id="mtu:Rv2973c"/>
<dbReference type="KEGG" id="mtv:RVBD_2973c"/>
<dbReference type="TubercuList" id="Rv2973c"/>
<dbReference type="eggNOG" id="COG1200">
    <property type="taxonomic scope" value="Bacteria"/>
</dbReference>
<dbReference type="InParanoid" id="P9WMQ7"/>
<dbReference type="OrthoDB" id="9804325at2"/>
<dbReference type="PhylomeDB" id="P9WMQ7"/>
<dbReference type="Proteomes" id="UP000001584">
    <property type="component" value="Chromosome"/>
</dbReference>
<dbReference type="GO" id="GO:0005886">
    <property type="term" value="C:plasma membrane"/>
    <property type="evidence" value="ECO:0007005"/>
    <property type="project" value="MTBBASE"/>
</dbReference>
<dbReference type="GO" id="GO:0005524">
    <property type="term" value="F:ATP binding"/>
    <property type="evidence" value="ECO:0007669"/>
    <property type="project" value="UniProtKB-KW"/>
</dbReference>
<dbReference type="GO" id="GO:0016887">
    <property type="term" value="F:ATP hydrolysis activity"/>
    <property type="evidence" value="ECO:0007669"/>
    <property type="project" value="RHEA"/>
</dbReference>
<dbReference type="GO" id="GO:0003677">
    <property type="term" value="F:DNA binding"/>
    <property type="evidence" value="ECO:0007669"/>
    <property type="project" value="UniProtKB-KW"/>
</dbReference>
<dbReference type="GO" id="GO:0003678">
    <property type="term" value="F:DNA helicase activity"/>
    <property type="evidence" value="ECO:0000318"/>
    <property type="project" value="GO_Central"/>
</dbReference>
<dbReference type="GO" id="GO:0006310">
    <property type="term" value="P:DNA recombination"/>
    <property type="evidence" value="ECO:0007669"/>
    <property type="project" value="UniProtKB-KW"/>
</dbReference>
<dbReference type="GO" id="GO:0006281">
    <property type="term" value="P:DNA repair"/>
    <property type="evidence" value="ECO:0000318"/>
    <property type="project" value="GO_Central"/>
</dbReference>
<dbReference type="CDD" id="cd17992">
    <property type="entry name" value="DEXHc_RecG"/>
    <property type="match status" value="1"/>
</dbReference>
<dbReference type="CDD" id="cd04488">
    <property type="entry name" value="RecG_wedge_OBF"/>
    <property type="match status" value="1"/>
</dbReference>
<dbReference type="FunFam" id="3.40.50.300:FF:000391">
    <property type="entry name" value="ATP-dependent DNA helicase RecG"/>
    <property type="match status" value="1"/>
</dbReference>
<dbReference type="Gene3D" id="2.40.50.140">
    <property type="entry name" value="Nucleic acid-binding proteins"/>
    <property type="match status" value="1"/>
</dbReference>
<dbReference type="Gene3D" id="3.40.50.300">
    <property type="entry name" value="P-loop containing nucleotide triphosphate hydrolases"/>
    <property type="match status" value="2"/>
</dbReference>
<dbReference type="InterPro" id="IPR004609">
    <property type="entry name" value="ATP-dep_DNA_helicase_RecG"/>
</dbReference>
<dbReference type="InterPro" id="IPR011545">
    <property type="entry name" value="DEAD/DEAH_box_helicase_dom"/>
</dbReference>
<dbReference type="InterPro" id="IPR014001">
    <property type="entry name" value="Helicase_ATP-bd"/>
</dbReference>
<dbReference type="InterPro" id="IPR001650">
    <property type="entry name" value="Helicase_C-like"/>
</dbReference>
<dbReference type="InterPro" id="IPR012340">
    <property type="entry name" value="NA-bd_OB-fold"/>
</dbReference>
<dbReference type="InterPro" id="IPR027417">
    <property type="entry name" value="P-loop_NTPase"/>
</dbReference>
<dbReference type="InterPro" id="IPR047112">
    <property type="entry name" value="RecG/Mfd"/>
</dbReference>
<dbReference type="InterPro" id="IPR033454">
    <property type="entry name" value="RecG_wedge"/>
</dbReference>
<dbReference type="NCBIfam" id="NF008167">
    <property type="entry name" value="PRK10917.2-1"/>
    <property type="match status" value="1"/>
</dbReference>
<dbReference type="NCBIfam" id="TIGR00643">
    <property type="entry name" value="recG"/>
    <property type="match status" value="1"/>
</dbReference>
<dbReference type="PANTHER" id="PTHR47964">
    <property type="entry name" value="ATP-DEPENDENT DNA HELICASE HOMOLOG RECG, CHLOROPLASTIC"/>
    <property type="match status" value="1"/>
</dbReference>
<dbReference type="PANTHER" id="PTHR47964:SF1">
    <property type="entry name" value="ATP-DEPENDENT DNA HELICASE HOMOLOG RECG, CHLOROPLASTIC"/>
    <property type="match status" value="1"/>
</dbReference>
<dbReference type="Pfam" id="PF00270">
    <property type="entry name" value="DEAD"/>
    <property type="match status" value="1"/>
</dbReference>
<dbReference type="Pfam" id="PF00271">
    <property type="entry name" value="Helicase_C"/>
    <property type="match status" value="1"/>
</dbReference>
<dbReference type="Pfam" id="PF17191">
    <property type="entry name" value="RecG_wedge"/>
    <property type="match status" value="1"/>
</dbReference>
<dbReference type="SMART" id="SM00487">
    <property type="entry name" value="DEXDc"/>
    <property type="match status" value="1"/>
</dbReference>
<dbReference type="SMART" id="SM00490">
    <property type="entry name" value="HELICc"/>
    <property type="match status" value="1"/>
</dbReference>
<dbReference type="SUPFAM" id="SSF50249">
    <property type="entry name" value="Nucleic acid-binding proteins"/>
    <property type="match status" value="1"/>
</dbReference>
<dbReference type="SUPFAM" id="SSF52540">
    <property type="entry name" value="P-loop containing nucleoside triphosphate hydrolases"/>
    <property type="match status" value="2"/>
</dbReference>
<dbReference type="PROSITE" id="PS51192">
    <property type="entry name" value="HELICASE_ATP_BIND_1"/>
    <property type="match status" value="1"/>
</dbReference>
<dbReference type="PROSITE" id="PS51194">
    <property type="entry name" value="HELICASE_CTER"/>
    <property type="match status" value="1"/>
</dbReference>